<dbReference type="EC" id="2.4.2.22" evidence="1"/>
<dbReference type="EMBL" id="AM295007">
    <property type="protein sequence ID" value="CAM30259.1"/>
    <property type="molecule type" value="Genomic_DNA"/>
</dbReference>
<dbReference type="RefSeq" id="WP_011888881.1">
    <property type="nucleotide sequence ID" value="NC_009332.1"/>
</dbReference>
<dbReference type="SMR" id="A2REI4"/>
<dbReference type="KEGG" id="spf:SpyM50932"/>
<dbReference type="HOGENOM" id="CLU_099015_0_0_9"/>
<dbReference type="UniPathway" id="UPA00602">
    <property type="reaction ID" value="UER00658"/>
</dbReference>
<dbReference type="GO" id="GO:0005737">
    <property type="term" value="C:cytoplasm"/>
    <property type="evidence" value="ECO:0007669"/>
    <property type="project" value="UniProtKB-SubCell"/>
</dbReference>
<dbReference type="GO" id="GO:0000310">
    <property type="term" value="F:xanthine phosphoribosyltransferase activity"/>
    <property type="evidence" value="ECO:0007669"/>
    <property type="project" value="UniProtKB-UniRule"/>
</dbReference>
<dbReference type="GO" id="GO:0006166">
    <property type="term" value="P:purine ribonucleoside salvage"/>
    <property type="evidence" value="ECO:0007669"/>
    <property type="project" value="UniProtKB-KW"/>
</dbReference>
<dbReference type="GO" id="GO:0046110">
    <property type="term" value="P:xanthine metabolic process"/>
    <property type="evidence" value="ECO:0007669"/>
    <property type="project" value="InterPro"/>
</dbReference>
<dbReference type="GO" id="GO:0032265">
    <property type="term" value="P:XMP salvage"/>
    <property type="evidence" value="ECO:0007669"/>
    <property type="project" value="UniProtKB-UniRule"/>
</dbReference>
<dbReference type="CDD" id="cd06223">
    <property type="entry name" value="PRTases_typeI"/>
    <property type="match status" value="1"/>
</dbReference>
<dbReference type="Gene3D" id="3.40.50.2020">
    <property type="match status" value="1"/>
</dbReference>
<dbReference type="HAMAP" id="MF_01184">
    <property type="entry name" value="XPRTase"/>
    <property type="match status" value="1"/>
</dbReference>
<dbReference type="InterPro" id="IPR000836">
    <property type="entry name" value="PRibTrfase_dom"/>
</dbReference>
<dbReference type="InterPro" id="IPR029057">
    <property type="entry name" value="PRTase-like"/>
</dbReference>
<dbReference type="InterPro" id="IPR050118">
    <property type="entry name" value="Pur/Pyrimidine_PRTase"/>
</dbReference>
<dbReference type="InterPro" id="IPR010079">
    <property type="entry name" value="Xanthine_PRibTrfase"/>
</dbReference>
<dbReference type="NCBIfam" id="NF006671">
    <property type="entry name" value="PRK09219.1"/>
    <property type="match status" value="1"/>
</dbReference>
<dbReference type="NCBIfam" id="TIGR01744">
    <property type="entry name" value="XPRTase"/>
    <property type="match status" value="1"/>
</dbReference>
<dbReference type="PANTHER" id="PTHR43864">
    <property type="entry name" value="HYPOXANTHINE/GUANINE PHOSPHORIBOSYLTRANSFERASE"/>
    <property type="match status" value="1"/>
</dbReference>
<dbReference type="PANTHER" id="PTHR43864:SF1">
    <property type="entry name" value="XANTHINE PHOSPHORIBOSYLTRANSFERASE"/>
    <property type="match status" value="1"/>
</dbReference>
<dbReference type="Pfam" id="PF00156">
    <property type="entry name" value="Pribosyltran"/>
    <property type="match status" value="1"/>
</dbReference>
<dbReference type="SUPFAM" id="SSF53271">
    <property type="entry name" value="PRTase-like"/>
    <property type="match status" value="1"/>
</dbReference>
<comment type="function">
    <text evidence="1">Converts the preformed base xanthine, a product of nucleic acid breakdown, to xanthosine 5'-monophosphate (XMP), so it can be reused for RNA or DNA synthesis.</text>
</comment>
<comment type="catalytic activity">
    <reaction evidence="1">
        <text>XMP + diphosphate = xanthine + 5-phospho-alpha-D-ribose 1-diphosphate</text>
        <dbReference type="Rhea" id="RHEA:10800"/>
        <dbReference type="ChEBI" id="CHEBI:17712"/>
        <dbReference type="ChEBI" id="CHEBI:33019"/>
        <dbReference type="ChEBI" id="CHEBI:57464"/>
        <dbReference type="ChEBI" id="CHEBI:58017"/>
        <dbReference type="EC" id="2.4.2.22"/>
    </reaction>
</comment>
<comment type="pathway">
    <text evidence="1">Purine metabolism; XMP biosynthesis via salvage pathway; XMP from xanthine: step 1/1.</text>
</comment>
<comment type="subunit">
    <text evidence="1">Homodimer.</text>
</comment>
<comment type="subcellular location">
    <subcellularLocation>
        <location evidence="1">Cytoplasm</location>
    </subcellularLocation>
</comment>
<comment type="similarity">
    <text evidence="1">Belongs to the purine/pyrimidine phosphoribosyltransferase family. Xpt subfamily.</text>
</comment>
<feature type="chain" id="PRO_0000339774" description="Xanthine phosphoribosyltransferase">
    <location>
        <begin position="1"/>
        <end position="193"/>
    </location>
</feature>
<feature type="binding site" evidence="1">
    <location>
        <position position="20"/>
    </location>
    <ligand>
        <name>xanthine</name>
        <dbReference type="ChEBI" id="CHEBI:17712"/>
    </ligand>
</feature>
<feature type="binding site" evidence="1">
    <location>
        <position position="27"/>
    </location>
    <ligand>
        <name>xanthine</name>
        <dbReference type="ChEBI" id="CHEBI:17712"/>
    </ligand>
</feature>
<feature type="binding site" evidence="1">
    <location>
        <begin position="128"/>
        <end position="132"/>
    </location>
    <ligand>
        <name>5-phospho-alpha-D-ribose 1-diphosphate</name>
        <dbReference type="ChEBI" id="CHEBI:58017"/>
    </ligand>
</feature>
<feature type="binding site" evidence="1">
    <location>
        <position position="156"/>
    </location>
    <ligand>
        <name>xanthine</name>
        <dbReference type="ChEBI" id="CHEBI:17712"/>
    </ligand>
</feature>
<organism>
    <name type="scientific">Streptococcus pyogenes serotype M5 (strain Manfredo)</name>
    <dbReference type="NCBI Taxonomy" id="160491"/>
    <lineage>
        <taxon>Bacteria</taxon>
        <taxon>Bacillati</taxon>
        <taxon>Bacillota</taxon>
        <taxon>Bacilli</taxon>
        <taxon>Lactobacillales</taxon>
        <taxon>Streptococcaceae</taxon>
        <taxon>Streptococcus</taxon>
    </lineage>
</organism>
<accession>A2REI4</accession>
<sequence length="193" mass="21024">MQLLEERILTDGNILGENILKVDNFLTHQVDYRLMKAIGKVFAQKYAEAGITKVVTIEASGIAPAVYAAEAMDVPMIFAKKHKNITMTEGILTAEVYSFTKQVMSTVSIAGKFLSKEDKVLIIDDFLANGQAAKGLIEIIGQAGAQVVGVGIVIEKSFQDGRRLIEDMGIEVTSLARIKNFENGNLNFLEADA</sequence>
<gene>
    <name evidence="1" type="primary">xpt</name>
    <name type="ordered locus">SpyM50932</name>
</gene>
<reference key="1">
    <citation type="journal article" date="2007" name="J. Bacteriol.">
        <title>Complete genome of acute rheumatic fever-associated serotype M5 Streptococcus pyogenes strain Manfredo.</title>
        <authorList>
            <person name="Holden M.T.G."/>
            <person name="Scott A."/>
            <person name="Cherevach I."/>
            <person name="Chillingworth T."/>
            <person name="Churcher C."/>
            <person name="Cronin A."/>
            <person name="Dowd L."/>
            <person name="Feltwell T."/>
            <person name="Hamlin N."/>
            <person name="Holroyd S."/>
            <person name="Jagels K."/>
            <person name="Moule S."/>
            <person name="Mungall K."/>
            <person name="Quail M.A."/>
            <person name="Price C."/>
            <person name="Rabbinowitsch E."/>
            <person name="Sharp S."/>
            <person name="Skelton J."/>
            <person name="Whitehead S."/>
            <person name="Barrell B.G."/>
            <person name="Kehoe M."/>
            <person name="Parkhill J."/>
        </authorList>
    </citation>
    <scope>NUCLEOTIDE SEQUENCE [LARGE SCALE GENOMIC DNA]</scope>
    <source>
        <strain>Manfredo</strain>
    </source>
</reference>
<evidence type="ECO:0000255" key="1">
    <source>
        <dbReference type="HAMAP-Rule" id="MF_01184"/>
    </source>
</evidence>
<name>XPT_STRPG</name>
<protein>
    <recommendedName>
        <fullName evidence="1">Xanthine phosphoribosyltransferase</fullName>
        <shortName evidence="1">XPRTase</shortName>
        <ecNumber evidence="1">2.4.2.22</ecNumber>
    </recommendedName>
</protein>
<proteinExistence type="inferred from homology"/>
<keyword id="KW-0963">Cytoplasm</keyword>
<keyword id="KW-0328">Glycosyltransferase</keyword>
<keyword id="KW-0660">Purine salvage</keyword>
<keyword id="KW-0808">Transferase</keyword>